<reference key="1">
    <citation type="journal article" date="2006" name="Appl. Environ. Microbiol.">
        <title>Complete genome sequence of the marine, chemolithoautotrophic, ammonia-oxidizing bacterium Nitrosococcus oceani ATCC 19707.</title>
        <authorList>
            <person name="Klotz M.G."/>
            <person name="Arp D.J."/>
            <person name="Chain P.S.G."/>
            <person name="El-Sheikh A.F."/>
            <person name="Hauser L.J."/>
            <person name="Hommes N.G."/>
            <person name="Larimer F.W."/>
            <person name="Malfatti S.A."/>
            <person name="Norton J.M."/>
            <person name="Poret-Peterson A.T."/>
            <person name="Vergez L.M."/>
            <person name="Ward B.B."/>
        </authorList>
    </citation>
    <scope>NUCLEOTIDE SEQUENCE [LARGE SCALE GENOMIC DNA]</scope>
    <source>
        <strain>ATCC 19707 / BCRC 17464 / JCM 30415 / NCIMB 11848 / C-107</strain>
    </source>
</reference>
<sequence>MAEKITIARPYANAVFELAQAQKNYDQWSRVLNVFADLARDSEMQILIDDPRYTSEQLIGLFVEIGGDTVTESAKNFIKILADNRRLSVLPEVAALFEQLRAEIEGTLEVEIISAKPLAEEQLNEIASALKRRLGREVTFSRKTDESLLGGVIIRAGDLVIDGSAIGKLNQLAASLLH</sequence>
<organism>
    <name type="scientific">Nitrosococcus oceani (strain ATCC 19707 / BCRC 17464 / JCM 30415 / NCIMB 11848 / C-107)</name>
    <dbReference type="NCBI Taxonomy" id="323261"/>
    <lineage>
        <taxon>Bacteria</taxon>
        <taxon>Pseudomonadati</taxon>
        <taxon>Pseudomonadota</taxon>
        <taxon>Gammaproteobacteria</taxon>
        <taxon>Chromatiales</taxon>
        <taxon>Chromatiaceae</taxon>
        <taxon>Nitrosococcus</taxon>
    </lineage>
</organism>
<dbReference type="EMBL" id="CP000127">
    <property type="protein sequence ID" value="ABA59518.1"/>
    <property type="molecule type" value="Genomic_DNA"/>
</dbReference>
<dbReference type="RefSeq" id="WP_002813942.1">
    <property type="nucleotide sequence ID" value="NC_007484.1"/>
</dbReference>
<dbReference type="SMR" id="Q3J6M8"/>
<dbReference type="FunCoup" id="Q3J6M8">
    <property type="interactions" value="386"/>
</dbReference>
<dbReference type="STRING" id="323261.Noc_3077"/>
<dbReference type="KEGG" id="noc:Noc_3077"/>
<dbReference type="eggNOG" id="COG0712">
    <property type="taxonomic scope" value="Bacteria"/>
</dbReference>
<dbReference type="HOGENOM" id="CLU_085114_3_0_6"/>
<dbReference type="InParanoid" id="Q3J6M8"/>
<dbReference type="Proteomes" id="UP000006838">
    <property type="component" value="Chromosome"/>
</dbReference>
<dbReference type="GO" id="GO:0005886">
    <property type="term" value="C:plasma membrane"/>
    <property type="evidence" value="ECO:0007669"/>
    <property type="project" value="UniProtKB-SubCell"/>
</dbReference>
<dbReference type="GO" id="GO:0045259">
    <property type="term" value="C:proton-transporting ATP synthase complex"/>
    <property type="evidence" value="ECO:0007669"/>
    <property type="project" value="UniProtKB-KW"/>
</dbReference>
<dbReference type="GO" id="GO:0046933">
    <property type="term" value="F:proton-transporting ATP synthase activity, rotational mechanism"/>
    <property type="evidence" value="ECO:0007669"/>
    <property type="project" value="UniProtKB-UniRule"/>
</dbReference>
<dbReference type="Gene3D" id="1.10.520.20">
    <property type="entry name" value="N-terminal domain of the delta subunit of the F1F0-ATP synthase"/>
    <property type="match status" value="1"/>
</dbReference>
<dbReference type="HAMAP" id="MF_01416">
    <property type="entry name" value="ATP_synth_delta_bact"/>
    <property type="match status" value="1"/>
</dbReference>
<dbReference type="InterPro" id="IPR026015">
    <property type="entry name" value="ATP_synth_OSCP/delta_N_sf"/>
</dbReference>
<dbReference type="InterPro" id="IPR020781">
    <property type="entry name" value="ATPase_OSCP/d_CS"/>
</dbReference>
<dbReference type="InterPro" id="IPR000711">
    <property type="entry name" value="ATPase_OSCP/dsu"/>
</dbReference>
<dbReference type="NCBIfam" id="TIGR01145">
    <property type="entry name" value="ATP_synt_delta"/>
    <property type="match status" value="1"/>
</dbReference>
<dbReference type="NCBIfam" id="NF004402">
    <property type="entry name" value="PRK05758.2-2"/>
    <property type="match status" value="1"/>
</dbReference>
<dbReference type="PANTHER" id="PTHR11910">
    <property type="entry name" value="ATP SYNTHASE DELTA CHAIN"/>
    <property type="match status" value="1"/>
</dbReference>
<dbReference type="Pfam" id="PF00213">
    <property type="entry name" value="OSCP"/>
    <property type="match status" value="1"/>
</dbReference>
<dbReference type="PRINTS" id="PR00125">
    <property type="entry name" value="ATPASEDELTA"/>
</dbReference>
<dbReference type="SUPFAM" id="SSF47928">
    <property type="entry name" value="N-terminal domain of the delta subunit of the F1F0-ATP synthase"/>
    <property type="match status" value="1"/>
</dbReference>
<dbReference type="PROSITE" id="PS00389">
    <property type="entry name" value="ATPASE_DELTA"/>
    <property type="match status" value="1"/>
</dbReference>
<gene>
    <name evidence="1" type="primary">atpH</name>
    <name type="ordered locus">Noc_3077</name>
</gene>
<proteinExistence type="inferred from homology"/>
<keyword id="KW-0066">ATP synthesis</keyword>
<keyword id="KW-0997">Cell inner membrane</keyword>
<keyword id="KW-1003">Cell membrane</keyword>
<keyword id="KW-0139">CF(1)</keyword>
<keyword id="KW-0375">Hydrogen ion transport</keyword>
<keyword id="KW-0406">Ion transport</keyword>
<keyword id="KW-0472">Membrane</keyword>
<keyword id="KW-1185">Reference proteome</keyword>
<keyword id="KW-0813">Transport</keyword>
<accession>Q3J6M8</accession>
<protein>
    <recommendedName>
        <fullName evidence="1">ATP synthase subunit delta</fullName>
    </recommendedName>
    <alternativeName>
        <fullName evidence="1">ATP synthase F(1) sector subunit delta</fullName>
    </alternativeName>
    <alternativeName>
        <fullName evidence="1">F-type ATPase subunit delta</fullName>
        <shortName evidence="1">F-ATPase subunit delta</shortName>
    </alternativeName>
</protein>
<comment type="function">
    <text evidence="1">F(1)F(0) ATP synthase produces ATP from ADP in the presence of a proton or sodium gradient. F-type ATPases consist of two structural domains, F(1) containing the extramembraneous catalytic core and F(0) containing the membrane proton channel, linked together by a central stalk and a peripheral stalk. During catalysis, ATP synthesis in the catalytic domain of F(1) is coupled via a rotary mechanism of the central stalk subunits to proton translocation.</text>
</comment>
<comment type="function">
    <text evidence="1">This protein is part of the stalk that links CF(0) to CF(1). It either transmits conformational changes from CF(0) to CF(1) or is implicated in proton conduction.</text>
</comment>
<comment type="subunit">
    <text evidence="1">F-type ATPases have 2 components, F(1) - the catalytic core - and F(0) - the membrane proton channel. F(1) has five subunits: alpha(3), beta(3), gamma(1), delta(1), epsilon(1). F(0) has three main subunits: a(1), b(2) and c(10-14). The alpha and beta chains form an alternating ring which encloses part of the gamma chain. F(1) is attached to F(0) by a central stalk formed by the gamma and epsilon chains, while a peripheral stalk is formed by the delta and b chains.</text>
</comment>
<comment type="subcellular location">
    <subcellularLocation>
        <location evidence="1">Cell inner membrane</location>
        <topology evidence="1">Peripheral membrane protein</topology>
    </subcellularLocation>
</comment>
<comment type="similarity">
    <text evidence="1">Belongs to the ATPase delta chain family.</text>
</comment>
<name>ATPD_NITOC</name>
<feature type="chain" id="PRO_1000184760" description="ATP synthase subunit delta">
    <location>
        <begin position="1"/>
        <end position="178"/>
    </location>
</feature>
<evidence type="ECO:0000255" key="1">
    <source>
        <dbReference type="HAMAP-Rule" id="MF_01416"/>
    </source>
</evidence>